<reference evidence="3" key="1">
    <citation type="submission" date="2004-10" db="EMBL/GenBank/DDBJ databases">
        <authorList>
            <consortium name="NIH - Xenopus Gene Collection (XGC) project"/>
        </authorList>
    </citation>
    <scope>NUCLEOTIDE SEQUENCE [LARGE SCALE MRNA]</scope>
    <source>
        <tissue evidence="3">Brain</tissue>
    </source>
</reference>
<protein>
    <recommendedName>
        <fullName>DnaJ homolog subfamily B member 6-B</fullName>
    </recommendedName>
</protein>
<keyword id="KW-0143">Chaperone</keyword>
<keyword id="KW-0963">Cytoplasm</keyword>
<keyword id="KW-0539">Nucleus</keyword>
<keyword id="KW-1185">Reference proteome</keyword>
<proteinExistence type="evidence at transcript level"/>
<gene>
    <name type="primary">dnajb6-b</name>
</gene>
<feature type="chain" id="PRO_0000292343" description="DnaJ homolog subfamily B member 6-B">
    <location>
        <begin position="1"/>
        <end position="245"/>
    </location>
</feature>
<feature type="domain" description="J" evidence="2">
    <location>
        <begin position="3"/>
        <end position="69"/>
    </location>
</feature>
<organism>
    <name type="scientific">Xenopus laevis</name>
    <name type="common">African clawed frog</name>
    <dbReference type="NCBI Taxonomy" id="8355"/>
    <lineage>
        <taxon>Eukaryota</taxon>
        <taxon>Metazoa</taxon>
        <taxon>Chordata</taxon>
        <taxon>Craniata</taxon>
        <taxon>Vertebrata</taxon>
        <taxon>Euteleostomi</taxon>
        <taxon>Amphibia</taxon>
        <taxon>Batrachia</taxon>
        <taxon>Anura</taxon>
        <taxon>Pipoidea</taxon>
        <taxon>Pipidae</taxon>
        <taxon>Xenopodinae</taxon>
        <taxon>Xenopus</taxon>
        <taxon>Xenopus</taxon>
    </lineage>
</organism>
<sequence length="245" mass="27113">MVEYYDVLGVQRNSSPDDIKKAYRRLALKWHPDKNPDNKEEAERRFKEVAEAYEVLSDSKKRDIYDKYGKEGLAGGGGGGGSHYDVPFQFGFTFRSPDDVFREFFGGRDPFSFDLFAEDPFDDFFGRRGHRGNRSRPGGGSFLSTFGGFPAFGPSFSPFDSGFSSSFGSFGGHGGFTSFSSSSFGGSGMGNVRSVSTSTKIVNGRRVTTKRIVENGQERVEVEEDGQLKSLTINGKEQLLRLDNK</sequence>
<evidence type="ECO:0000250" key="1">
    <source>
        <dbReference type="UniProtKB" id="O75190"/>
    </source>
</evidence>
<evidence type="ECO:0000255" key="2">
    <source>
        <dbReference type="PROSITE-ProRule" id="PRU00286"/>
    </source>
</evidence>
<evidence type="ECO:0000312" key="3">
    <source>
        <dbReference type="EMBL" id="AAH84334.1"/>
    </source>
</evidence>
<dbReference type="EMBL" id="BC084334">
    <property type="protein sequence ID" value="AAH84334.1"/>
    <property type="molecule type" value="mRNA"/>
</dbReference>
<dbReference type="RefSeq" id="NP_001088302.1">
    <property type="nucleotide sequence ID" value="NM_001094833.1"/>
</dbReference>
<dbReference type="SMR" id="Q5XGU5"/>
<dbReference type="DNASU" id="495138"/>
<dbReference type="AGR" id="Xenbase:XB-GENE-972418"/>
<dbReference type="Xenbase" id="XB-GENE-972418">
    <property type="gene designation" value="dnajb6.S"/>
</dbReference>
<dbReference type="Proteomes" id="UP000186698">
    <property type="component" value="Unplaced"/>
</dbReference>
<dbReference type="Bgee" id="495138">
    <property type="expression patterns" value="Expressed in heart and 19 other cell types or tissues"/>
</dbReference>
<dbReference type="GO" id="GO:0005634">
    <property type="term" value="C:nucleus"/>
    <property type="evidence" value="ECO:0007669"/>
    <property type="project" value="UniProtKB-SubCell"/>
</dbReference>
<dbReference type="GO" id="GO:0048471">
    <property type="term" value="C:perinuclear region of cytoplasm"/>
    <property type="evidence" value="ECO:0007669"/>
    <property type="project" value="UniProtKB-SubCell"/>
</dbReference>
<dbReference type="GO" id="GO:0030544">
    <property type="term" value="F:Hsp70 protein binding"/>
    <property type="evidence" value="ECO:0007669"/>
    <property type="project" value="InterPro"/>
</dbReference>
<dbReference type="GO" id="GO:0051082">
    <property type="term" value="F:unfolded protein binding"/>
    <property type="evidence" value="ECO:0007669"/>
    <property type="project" value="InterPro"/>
</dbReference>
<dbReference type="GO" id="GO:0061077">
    <property type="term" value="P:chaperone-mediated protein folding"/>
    <property type="evidence" value="ECO:0007669"/>
    <property type="project" value="InterPro"/>
</dbReference>
<dbReference type="CDD" id="cd06257">
    <property type="entry name" value="DnaJ"/>
    <property type="match status" value="1"/>
</dbReference>
<dbReference type="FunFam" id="1.10.287.110:FF:000022">
    <property type="entry name" value="DnaJ homolog subfamily B member 6"/>
    <property type="match status" value="1"/>
</dbReference>
<dbReference type="Gene3D" id="1.10.287.110">
    <property type="entry name" value="DnaJ domain"/>
    <property type="match status" value="1"/>
</dbReference>
<dbReference type="InterPro" id="IPR001623">
    <property type="entry name" value="DnaJ_domain"/>
</dbReference>
<dbReference type="InterPro" id="IPR018253">
    <property type="entry name" value="DnaJ_domain_CS"/>
</dbReference>
<dbReference type="InterPro" id="IPR043183">
    <property type="entry name" value="DNJB2/6-like"/>
</dbReference>
<dbReference type="InterPro" id="IPR036869">
    <property type="entry name" value="J_dom_sf"/>
</dbReference>
<dbReference type="PANTHER" id="PTHR45168">
    <property type="entry name" value="DNAJ HOMOLOG SUBFAMILY B MEMBER 2"/>
    <property type="match status" value="1"/>
</dbReference>
<dbReference type="PANTHER" id="PTHR45168:SF4">
    <property type="entry name" value="SIMILAR TO DNAJ HOMOLOG SUBFAMILY B MEMBER 6 (HEAT SHOCK PROTEIN J2) (HSJ-2) (MRJ) (MDJ4)"/>
    <property type="match status" value="1"/>
</dbReference>
<dbReference type="Pfam" id="PF00226">
    <property type="entry name" value="DnaJ"/>
    <property type="match status" value="1"/>
</dbReference>
<dbReference type="PRINTS" id="PR00625">
    <property type="entry name" value="JDOMAIN"/>
</dbReference>
<dbReference type="SMART" id="SM00271">
    <property type="entry name" value="DnaJ"/>
    <property type="match status" value="1"/>
</dbReference>
<dbReference type="SUPFAM" id="SSF46565">
    <property type="entry name" value="Chaperone J-domain"/>
    <property type="match status" value="1"/>
</dbReference>
<dbReference type="PROSITE" id="PS00636">
    <property type="entry name" value="DNAJ_1"/>
    <property type="match status" value="1"/>
</dbReference>
<dbReference type="PROSITE" id="PS50076">
    <property type="entry name" value="DNAJ_2"/>
    <property type="match status" value="1"/>
</dbReference>
<comment type="function">
    <text evidence="1">Has a stimulatory effect on the ATPase activity of HSP70 in a dose-dependent and time-dependent manner and hence acts as a co-chaperone of HSP70. Plays an indispensable role in the organization of KRT8/KRT18 filaments. Acts as an endogenous molecular chaperone for neuronal proteins including huntingtin. Suppresses aggregation and toxicity of polyglutamine-containing, aggregation-prone proteins. Also reduces cellular toxicity and caspase-3 activity.</text>
</comment>
<comment type="subunit">
    <text evidence="1">Homooligomer.</text>
</comment>
<comment type="subcellular location">
    <subcellularLocation>
        <location evidence="1">Cytoplasm</location>
        <location evidence="1">Perinuclear region</location>
    </subcellularLocation>
    <subcellularLocation>
        <location evidence="1">Nucleus</location>
    </subcellularLocation>
</comment>
<name>DNJ6B_XENLA</name>
<accession>Q5XGU5</accession>